<proteinExistence type="inferred from homology"/>
<gene>
    <name evidence="1" type="primary">guaC</name>
    <name type="ordered locus">SEN0145</name>
</gene>
<dbReference type="EC" id="1.7.1.7" evidence="1"/>
<dbReference type="EMBL" id="AM933172">
    <property type="protein sequence ID" value="CAR31733.1"/>
    <property type="molecule type" value="Genomic_DNA"/>
</dbReference>
<dbReference type="RefSeq" id="WP_001217365.1">
    <property type="nucleotide sequence ID" value="NC_011294.1"/>
</dbReference>
<dbReference type="SMR" id="B5R2N9"/>
<dbReference type="KEGG" id="set:SEN0145"/>
<dbReference type="HOGENOM" id="CLU_022552_5_3_6"/>
<dbReference type="Proteomes" id="UP000000613">
    <property type="component" value="Chromosome"/>
</dbReference>
<dbReference type="GO" id="GO:0005829">
    <property type="term" value="C:cytosol"/>
    <property type="evidence" value="ECO:0007669"/>
    <property type="project" value="TreeGrafter"/>
</dbReference>
<dbReference type="GO" id="GO:1902560">
    <property type="term" value="C:GMP reductase complex"/>
    <property type="evidence" value="ECO:0007669"/>
    <property type="project" value="InterPro"/>
</dbReference>
<dbReference type="GO" id="GO:0003920">
    <property type="term" value="F:GMP reductase activity"/>
    <property type="evidence" value="ECO:0007669"/>
    <property type="project" value="UniProtKB-UniRule"/>
</dbReference>
<dbReference type="GO" id="GO:0046872">
    <property type="term" value="F:metal ion binding"/>
    <property type="evidence" value="ECO:0007669"/>
    <property type="project" value="UniProtKB-KW"/>
</dbReference>
<dbReference type="GO" id="GO:0006163">
    <property type="term" value="P:purine nucleotide metabolic process"/>
    <property type="evidence" value="ECO:0007669"/>
    <property type="project" value="UniProtKB-UniRule"/>
</dbReference>
<dbReference type="CDD" id="cd00381">
    <property type="entry name" value="IMPDH"/>
    <property type="match status" value="1"/>
</dbReference>
<dbReference type="FunFam" id="3.20.20.70:FF:000012">
    <property type="entry name" value="GMP reductase"/>
    <property type="match status" value="1"/>
</dbReference>
<dbReference type="Gene3D" id="3.20.20.70">
    <property type="entry name" value="Aldolase class I"/>
    <property type="match status" value="1"/>
</dbReference>
<dbReference type="HAMAP" id="MF_00596">
    <property type="entry name" value="GMP_reduct_type1"/>
    <property type="match status" value="1"/>
</dbReference>
<dbReference type="InterPro" id="IPR013785">
    <property type="entry name" value="Aldolase_TIM"/>
</dbReference>
<dbReference type="InterPro" id="IPR050139">
    <property type="entry name" value="GMP_reductase"/>
</dbReference>
<dbReference type="InterPro" id="IPR005993">
    <property type="entry name" value="GMPR"/>
</dbReference>
<dbReference type="InterPro" id="IPR015875">
    <property type="entry name" value="IMP_DH/GMP_Rdtase_CS"/>
</dbReference>
<dbReference type="InterPro" id="IPR001093">
    <property type="entry name" value="IMP_DH_GMPRt"/>
</dbReference>
<dbReference type="NCBIfam" id="TIGR01305">
    <property type="entry name" value="GMP_reduct_1"/>
    <property type="match status" value="1"/>
</dbReference>
<dbReference type="NCBIfam" id="NF003470">
    <property type="entry name" value="PRK05096.1"/>
    <property type="match status" value="1"/>
</dbReference>
<dbReference type="PANTHER" id="PTHR43170">
    <property type="entry name" value="GMP REDUCTASE"/>
    <property type="match status" value="1"/>
</dbReference>
<dbReference type="PANTHER" id="PTHR43170:SF5">
    <property type="entry name" value="GMP REDUCTASE"/>
    <property type="match status" value="1"/>
</dbReference>
<dbReference type="Pfam" id="PF00478">
    <property type="entry name" value="IMPDH"/>
    <property type="match status" value="1"/>
</dbReference>
<dbReference type="PIRSF" id="PIRSF000235">
    <property type="entry name" value="GMP_reductase"/>
    <property type="match status" value="1"/>
</dbReference>
<dbReference type="SMART" id="SM01240">
    <property type="entry name" value="IMPDH"/>
    <property type="match status" value="1"/>
</dbReference>
<dbReference type="SUPFAM" id="SSF51412">
    <property type="entry name" value="Inosine monophosphate dehydrogenase (IMPDH)"/>
    <property type="match status" value="1"/>
</dbReference>
<dbReference type="PROSITE" id="PS00487">
    <property type="entry name" value="IMP_DH_GMP_RED"/>
    <property type="match status" value="1"/>
</dbReference>
<keyword id="KW-0479">Metal-binding</keyword>
<keyword id="KW-0521">NADP</keyword>
<keyword id="KW-0560">Oxidoreductase</keyword>
<keyword id="KW-0630">Potassium</keyword>
<reference key="1">
    <citation type="journal article" date="2008" name="Genome Res.">
        <title>Comparative genome analysis of Salmonella enteritidis PT4 and Salmonella gallinarum 287/91 provides insights into evolutionary and host adaptation pathways.</title>
        <authorList>
            <person name="Thomson N.R."/>
            <person name="Clayton D.J."/>
            <person name="Windhorst D."/>
            <person name="Vernikos G."/>
            <person name="Davidson S."/>
            <person name="Churcher C."/>
            <person name="Quail M.A."/>
            <person name="Stevens M."/>
            <person name="Jones M.A."/>
            <person name="Watson M."/>
            <person name="Barron A."/>
            <person name="Layton A."/>
            <person name="Pickard D."/>
            <person name="Kingsley R.A."/>
            <person name="Bignell A."/>
            <person name="Clark L."/>
            <person name="Harris B."/>
            <person name="Ormond D."/>
            <person name="Abdellah Z."/>
            <person name="Brooks K."/>
            <person name="Cherevach I."/>
            <person name="Chillingworth T."/>
            <person name="Woodward J."/>
            <person name="Norberczak H."/>
            <person name="Lord A."/>
            <person name="Arrowsmith C."/>
            <person name="Jagels K."/>
            <person name="Moule S."/>
            <person name="Mungall K."/>
            <person name="Saunders M."/>
            <person name="Whitehead S."/>
            <person name="Chabalgoity J.A."/>
            <person name="Maskell D."/>
            <person name="Humphreys T."/>
            <person name="Roberts M."/>
            <person name="Barrow P.A."/>
            <person name="Dougan G."/>
            <person name="Parkhill J."/>
        </authorList>
    </citation>
    <scope>NUCLEOTIDE SEQUENCE [LARGE SCALE GENOMIC DNA]</scope>
    <source>
        <strain>P125109</strain>
    </source>
</reference>
<feature type="chain" id="PRO_1000129862" description="GMP reductase">
    <location>
        <begin position="1"/>
        <end position="347"/>
    </location>
</feature>
<feature type="active site" description="Thioimidate intermediate" evidence="1">
    <location>
        <position position="186"/>
    </location>
</feature>
<feature type="binding site" evidence="1">
    <location>
        <begin position="108"/>
        <end position="131"/>
    </location>
    <ligand>
        <name>NADP(+)</name>
        <dbReference type="ChEBI" id="CHEBI:58349"/>
    </ligand>
</feature>
<feature type="binding site" evidence="1">
    <location>
        <position position="181"/>
    </location>
    <ligand>
        <name>K(+)</name>
        <dbReference type="ChEBI" id="CHEBI:29103"/>
    </ligand>
</feature>
<feature type="binding site" evidence="1">
    <location>
        <position position="183"/>
    </location>
    <ligand>
        <name>K(+)</name>
        <dbReference type="ChEBI" id="CHEBI:29103"/>
    </ligand>
</feature>
<feature type="binding site" evidence="1">
    <location>
        <begin position="216"/>
        <end position="239"/>
    </location>
    <ligand>
        <name>NADP(+)</name>
        <dbReference type="ChEBI" id="CHEBI:58349"/>
    </ligand>
</feature>
<protein>
    <recommendedName>
        <fullName evidence="1">GMP reductase</fullName>
        <ecNumber evidence="1">1.7.1.7</ecNumber>
    </recommendedName>
    <alternativeName>
        <fullName evidence="1">Guanosine 5'-monophosphate oxidoreductase</fullName>
        <shortName evidence="1">Guanosine monophosphate reductase</shortName>
    </alternativeName>
</protein>
<name>GUAC_SALEP</name>
<sequence>MRIEEDLKLGFKDVLIRPKRSTLKSRSDVELERQFTFKHSGQTWSGVPIIAANMDTVGTFEMAQALAGFDILTAVHKHYTVEEWAAFINTASADVLKHVMVSTGTSDADFEKTVQILALNPALNFVCIDVANGYSEHFVQFVAKAREAWPTKTICAGNVVTGEMCEELILSGADIVKVGIGPGSVCTTRVKTGVGYPQLSAVIECADAAHGLGGMIVSDGGCTMPGDVAKAFGGGADFVMLGGMLAGHEESGGSVVEENGEKFMLFYGMSSESAMNRHVGGVAKYRAAEGKTVKLPLRGPVGNTARDILGGLRSACTYVGASRLKELTKRTTFIRVQEQENRIFNSL</sequence>
<comment type="function">
    <text evidence="1">Catalyzes the irreversible NADPH-dependent deamination of GMP to IMP. It functions in the conversion of nucleobase, nucleoside and nucleotide derivatives of G to A nucleotides, and in maintaining the intracellular balance of A and G nucleotides.</text>
</comment>
<comment type="catalytic activity">
    <reaction evidence="1">
        <text>IMP + NH4(+) + NADP(+) = GMP + NADPH + 2 H(+)</text>
        <dbReference type="Rhea" id="RHEA:17185"/>
        <dbReference type="ChEBI" id="CHEBI:15378"/>
        <dbReference type="ChEBI" id="CHEBI:28938"/>
        <dbReference type="ChEBI" id="CHEBI:57783"/>
        <dbReference type="ChEBI" id="CHEBI:58053"/>
        <dbReference type="ChEBI" id="CHEBI:58115"/>
        <dbReference type="ChEBI" id="CHEBI:58349"/>
        <dbReference type="EC" id="1.7.1.7"/>
    </reaction>
</comment>
<comment type="subunit">
    <text evidence="1">Homotetramer.</text>
</comment>
<comment type="similarity">
    <text evidence="1">Belongs to the IMPDH/GMPR family. GuaC type 1 subfamily.</text>
</comment>
<accession>B5R2N9</accession>
<organism>
    <name type="scientific">Salmonella enteritidis PT4 (strain P125109)</name>
    <dbReference type="NCBI Taxonomy" id="550537"/>
    <lineage>
        <taxon>Bacteria</taxon>
        <taxon>Pseudomonadati</taxon>
        <taxon>Pseudomonadota</taxon>
        <taxon>Gammaproteobacteria</taxon>
        <taxon>Enterobacterales</taxon>
        <taxon>Enterobacteriaceae</taxon>
        <taxon>Salmonella</taxon>
    </lineage>
</organism>
<evidence type="ECO:0000255" key="1">
    <source>
        <dbReference type="HAMAP-Rule" id="MF_00596"/>
    </source>
</evidence>